<feature type="chain" id="PRO_1000063388" description="Phosphoribosyl-AMP cyclohydrolase">
    <location>
        <begin position="1"/>
        <end position="101"/>
    </location>
</feature>
<feature type="binding site" evidence="1">
    <location>
        <position position="71"/>
    </location>
    <ligand>
        <name>Mg(2+)</name>
        <dbReference type="ChEBI" id="CHEBI:18420"/>
    </ligand>
</feature>
<feature type="binding site" evidence="1">
    <location>
        <position position="72"/>
    </location>
    <ligand>
        <name>Zn(2+)</name>
        <dbReference type="ChEBI" id="CHEBI:29105"/>
        <note>ligand shared between dimeric partners</note>
    </ligand>
</feature>
<feature type="binding site" evidence="1">
    <location>
        <position position="73"/>
    </location>
    <ligand>
        <name>Mg(2+)</name>
        <dbReference type="ChEBI" id="CHEBI:18420"/>
    </ligand>
</feature>
<feature type="binding site" evidence="1">
    <location>
        <position position="75"/>
    </location>
    <ligand>
        <name>Mg(2+)</name>
        <dbReference type="ChEBI" id="CHEBI:18420"/>
    </ligand>
</feature>
<feature type="binding site" evidence="1">
    <location>
        <position position="88"/>
    </location>
    <ligand>
        <name>Zn(2+)</name>
        <dbReference type="ChEBI" id="CHEBI:29105"/>
        <note>ligand shared between dimeric partners</note>
    </ligand>
</feature>
<feature type="binding site" evidence="1">
    <location>
        <position position="95"/>
    </location>
    <ligand>
        <name>Zn(2+)</name>
        <dbReference type="ChEBI" id="CHEBI:29105"/>
        <note>ligand shared between dimeric partners</note>
    </ligand>
</feature>
<name>HIS3_BACAH</name>
<accession>A0RBM3</accession>
<sequence>MKPNFSKGLLPAVVIEEGTKEVLMLAYMNEEAYEKTLKTKRTWFYSRSRRSLWNKGETSGHVQHVQSLYLDCDQDSIVVVVKQVGPACHTGEKTCFHYKII</sequence>
<organism>
    <name type="scientific">Bacillus thuringiensis (strain Al Hakam)</name>
    <dbReference type="NCBI Taxonomy" id="412694"/>
    <lineage>
        <taxon>Bacteria</taxon>
        <taxon>Bacillati</taxon>
        <taxon>Bacillota</taxon>
        <taxon>Bacilli</taxon>
        <taxon>Bacillales</taxon>
        <taxon>Bacillaceae</taxon>
        <taxon>Bacillus</taxon>
        <taxon>Bacillus cereus group</taxon>
    </lineage>
</organism>
<keyword id="KW-0028">Amino-acid biosynthesis</keyword>
<keyword id="KW-0963">Cytoplasm</keyword>
<keyword id="KW-0368">Histidine biosynthesis</keyword>
<keyword id="KW-0378">Hydrolase</keyword>
<keyword id="KW-0460">Magnesium</keyword>
<keyword id="KW-0479">Metal-binding</keyword>
<keyword id="KW-0862">Zinc</keyword>
<evidence type="ECO:0000255" key="1">
    <source>
        <dbReference type="HAMAP-Rule" id="MF_01021"/>
    </source>
</evidence>
<gene>
    <name evidence="1" type="primary">hisI</name>
    <name type="ordered locus">BALH_1266</name>
</gene>
<dbReference type="EC" id="3.5.4.19" evidence="1"/>
<dbReference type="EMBL" id="CP000485">
    <property type="protein sequence ID" value="ABK84616.1"/>
    <property type="molecule type" value="Genomic_DNA"/>
</dbReference>
<dbReference type="RefSeq" id="WP_000803980.1">
    <property type="nucleotide sequence ID" value="NC_008600.1"/>
</dbReference>
<dbReference type="SMR" id="A0RBM3"/>
<dbReference type="KEGG" id="btl:BALH_1266"/>
<dbReference type="HOGENOM" id="CLU_048577_5_3_9"/>
<dbReference type="UniPathway" id="UPA00031">
    <property type="reaction ID" value="UER00008"/>
</dbReference>
<dbReference type="GO" id="GO:0005737">
    <property type="term" value="C:cytoplasm"/>
    <property type="evidence" value="ECO:0007669"/>
    <property type="project" value="UniProtKB-SubCell"/>
</dbReference>
<dbReference type="GO" id="GO:0000287">
    <property type="term" value="F:magnesium ion binding"/>
    <property type="evidence" value="ECO:0007669"/>
    <property type="project" value="UniProtKB-UniRule"/>
</dbReference>
<dbReference type="GO" id="GO:0004635">
    <property type="term" value="F:phosphoribosyl-AMP cyclohydrolase activity"/>
    <property type="evidence" value="ECO:0007669"/>
    <property type="project" value="UniProtKB-UniRule"/>
</dbReference>
<dbReference type="GO" id="GO:0008270">
    <property type="term" value="F:zinc ion binding"/>
    <property type="evidence" value="ECO:0007669"/>
    <property type="project" value="UniProtKB-UniRule"/>
</dbReference>
<dbReference type="GO" id="GO:0000105">
    <property type="term" value="P:L-histidine biosynthetic process"/>
    <property type="evidence" value="ECO:0007669"/>
    <property type="project" value="UniProtKB-UniRule"/>
</dbReference>
<dbReference type="FunFam" id="3.10.20.810:FF:000001">
    <property type="entry name" value="Histidine biosynthesis bifunctional protein HisIE"/>
    <property type="match status" value="1"/>
</dbReference>
<dbReference type="Gene3D" id="3.10.20.810">
    <property type="entry name" value="Phosphoribosyl-AMP cyclohydrolase"/>
    <property type="match status" value="1"/>
</dbReference>
<dbReference type="HAMAP" id="MF_01021">
    <property type="entry name" value="HisI"/>
    <property type="match status" value="1"/>
</dbReference>
<dbReference type="InterPro" id="IPR026660">
    <property type="entry name" value="PRA-CH"/>
</dbReference>
<dbReference type="InterPro" id="IPR002496">
    <property type="entry name" value="PRib_AMP_CycHydrolase_dom"/>
</dbReference>
<dbReference type="InterPro" id="IPR038019">
    <property type="entry name" value="PRib_AMP_CycHydrolase_sf"/>
</dbReference>
<dbReference type="NCBIfam" id="NF000768">
    <property type="entry name" value="PRK00051.1"/>
    <property type="match status" value="1"/>
</dbReference>
<dbReference type="PANTHER" id="PTHR42945">
    <property type="entry name" value="HISTIDINE BIOSYNTHESIS BIFUNCTIONAL PROTEIN"/>
    <property type="match status" value="1"/>
</dbReference>
<dbReference type="PANTHER" id="PTHR42945:SF1">
    <property type="entry name" value="HISTIDINE BIOSYNTHESIS BIFUNCTIONAL PROTEIN HIS7"/>
    <property type="match status" value="1"/>
</dbReference>
<dbReference type="Pfam" id="PF01502">
    <property type="entry name" value="PRA-CH"/>
    <property type="match status" value="1"/>
</dbReference>
<dbReference type="SUPFAM" id="SSF141734">
    <property type="entry name" value="HisI-like"/>
    <property type="match status" value="1"/>
</dbReference>
<comment type="function">
    <text evidence="1">Catalyzes the hydrolysis of the adenine ring of phosphoribosyl-AMP.</text>
</comment>
<comment type="catalytic activity">
    <reaction evidence="1">
        <text>1-(5-phospho-beta-D-ribosyl)-5'-AMP + H2O = 1-(5-phospho-beta-D-ribosyl)-5-[(5-phospho-beta-D-ribosylamino)methylideneamino]imidazole-4-carboxamide</text>
        <dbReference type="Rhea" id="RHEA:20049"/>
        <dbReference type="ChEBI" id="CHEBI:15377"/>
        <dbReference type="ChEBI" id="CHEBI:58435"/>
        <dbReference type="ChEBI" id="CHEBI:59457"/>
        <dbReference type="EC" id="3.5.4.19"/>
    </reaction>
</comment>
<comment type="cofactor">
    <cofactor evidence="1">
        <name>Mg(2+)</name>
        <dbReference type="ChEBI" id="CHEBI:18420"/>
    </cofactor>
    <text evidence="1">Binds 1 Mg(2+) ion per subunit.</text>
</comment>
<comment type="cofactor">
    <cofactor evidence="1">
        <name>Zn(2+)</name>
        <dbReference type="ChEBI" id="CHEBI:29105"/>
    </cofactor>
    <text evidence="1">Binds 1 zinc ion per subunit.</text>
</comment>
<comment type="pathway">
    <text evidence="1">Amino-acid biosynthesis; L-histidine biosynthesis; L-histidine from 5-phospho-alpha-D-ribose 1-diphosphate: step 3/9.</text>
</comment>
<comment type="subunit">
    <text evidence="1">Homodimer.</text>
</comment>
<comment type="subcellular location">
    <subcellularLocation>
        <location evidence="1">Cytoplasm</location>
    </subcellularLocation>
</comment>
<comment type="similarity">
    <text evidence="1">Belongs to the PRA-CH family.</text>
</comment>
<protein>
    <recommendedName>
        <fullName evidence="1">Phosphoribosyl-AMP cyclohydrolase</fullName>
        <shortName evidence="1">PRA-CH</shortName>
        <ecNumber evidence="1">3.5.4.19</ecNumber>
    </recommendedName>
</protein>
<proteinExistence type="inferred from homology"/>
<reference key="1">
    <citation type="journal article" date="2007" name="J. Bacteriol.">
        <title>The complete genome sequence of Bacillus thuringiensis Al Hakam.</title>
        <authorList>
            <person name="Challacombe J.F."/>
            <person name="Altherr M.R."/>
            <person name="Xie G."/>
            <person name="Bhotika S.S."/>
            <person name="Brown N."/>
            <person name="Bruce D."/>
            <person name="Campbell C.S."/>
            <person name="Campbell M.L."/>
            <person name="Chen J."/>
            <person name="Chertkov O."/>
            <person name="Cleland C."/>
            <person name="Dimitrijevic M."/>
            <person name="Doggett N.A."/>
            <person name="Fawcett J.J."/>
            <person name="Glavina T."/>
            <person name="Goodwin L.A."/>
            <person name="Green L.D."/>
            <person name="Han C.S."/>
            <person name="Hill K.K."/>
            <person name="Hitchcock P."/>
            <person name="Jackson P.J."/>
            <person name="Keim P."/>
            <person name="Kewalramani A.R."/>
            <person name="Longmire J."/>
            <person name="Lucas S."/>
            <person name="Malfatti S."/>
            <person name="Martinez D."/>
            <person name="McMurry K."/>
            <person name="Meincke L.J."/>
            <person name="Misra M."/>
            <person name="Moseman B.L."/>
            <person name="Mundt M."/>
            <person name="Munk A.C."/>
            <person name="Okinaka R.T."/>
            <person name="Parson-Quintana B."/>
            <person name="Reilly L.P."/>
            <person name="Richardson P."/>
            <person name="Robinson D.L."/>
            <person name="Saunders E."/>
            <person name="Tapia R."/>
            <person name="Tesmer J.G."/>
            <person name="Thayer N."/>
            <person name="Thompson L.S."/>
            <person name="Tice H."/>
            <person name="Ticknor L.O."/>
            <person name="Wills P.L."/>
            <person name="Gilna P."/>
            <person name="Brettin T.S."/>
        </authorList>
    </citation>
    <scope>NUCLEOTIDE SEQUENCE [LARGE SCALE GENOMIC DNA]</scope>
    <source>
        <strain>Al Hakam</strain>
    </source>
</reference>